<feature type="chain" id="PRO_0000209277" description="Bifunctional glutamine synthetase adenylyltransferase/adenylyl-removing enzyme">
    <location>
        <begin position="1"/>
        <end position="954"/>
    </location>
</feature>
<feature type="region of interest" description="Adenylyl removase" evidence="1">
    <location>
        <begin position="1"/>
        <end position="452"/>
    </location>
</feature>
<feature type="region of interest" description="Adenylyl transferase" evidence="1">
    <location>
        <begin position="458"/>
        <end position="954"/>
    </location>
</feature>
<comment type="function">
    <text evidence="1">Involved in the regulation of glutamine synthetase GlnA, a key enzyme in the process to assimilate ammonia. When cellular nitrogen levels are high, the C-terminal adenylyl transferase (AT) inactivates GlnA by covalent transfer of an adenylyl group from ATP to specific tyrosine residue of GlnA, thus reducing its activity. Conversely, when nitrogen levels are low, the N-terminal adenylyl removase (AR) activates GlnA by removing the adenylyl group by phosphorolysis, increasing its activity. The regulatory region of GlnE binds the signal transduction protein PII (GlnB) which indicates the nitrogen status of the cell.</text>
</comment>
<comment type="catalytic activity">
    <reaction evidence="1">
        <text>[glutamine synthetase]-O(4)-(5'-adenylyl)-L-tyrosine + phosphate = [glutamine synthetase]-L-tyrosine + ADP</text>
        <dbReference type="Rhea" id="RHEA:43716"/>
        <dbReference type="Rhea" id="RHEA-COMP:10660"/>
        <dbReference type="Rhea" id="RHEA-COMP:10661"/>
        <dbReference type="ChEBI" id="CHEBI:43474"/>
        <dbReference type="ChEBI" id="CHEBI:46858"/>
        <dbReference type="ChEBI" id="CHEBI:83624"/>
        <dbReference type="ChEBI" id="CHEBI:456216"/>
        <dbReference type="EC" id="2.7.7.89"/>
    </reaction>
</comment>
<comment type="catalytic activity">
    <reaction evidence="1">
        <text>[glutamine synthetase]-L-tyrosine + ATP = [glutamine synthetase]-O(4)-(5'-adenylyl)-L-tyrosine + diphosphate</text>
        <dbReference type="Rhea" id="RHEA:18589"/>
        <dbReference type="Rhea" id="RHEA-COMP:10660"/>
        <dbReference type="Rhea" id="RHEA-COMP:10661"/>
        <dbReference type="ChEBI" id="CHEBI:30616"/>
        <dbReference type="ChEBI" id="CHEBI:33019"/>
        <dbReference type="ChEBI" id="CHEBI:46858"/>
        <dbReference type="ChEBI" id="CHEBI:83624"/>
        <dbReference type="EC" id="2.7.7.42"/>
    </reaction>
</comment>
<comment type="cofactor">
    <cofactor evidence="1">
        <name>Mg(2+)</name>
        <dbReference type="ChEBI" id="CHEBI:18420"/>
    </cofactor>
</comment>
<comment type="similarity">
    <text evidence="1">Belongs to the GlnE family.</text>
</comment>
<evidence type="ECO:0000255" key="1">
    <source>
        <dbReference type="HAMAP-Rule" id="MF_00802"/>
    </source>
</evidence>
<organism>
    <name type="scientific">Shewanella oneidensis (strain ATCC 700550 / JCM 31522 / CIP 106686 / LMG 19005 / NCIMB 14063 / MR-1)</name>
    <dbReference type="NCBI Taxonomy" id="211586"/>
    <lineage>
        <taxon>Bacteria</taxon>
        <taxon>Pseudomonadati</taxon>
        <taxon>Pseudomonadota</taxon>
        <taxon>Gammaproteobacteria</taxon>
        <taxon>Alteromonadales</taxon>
        <taxon>Shewanellaceae</taxon>
        <taxon>Shewanella</taxon>
    </lineage>
</organism>
<protein>
    <recommendedName>
        <fullName evidence="1">Bifunctional glutamine synthetase adenylyltransferase/adenylyl-removing enzyme</fullName>
    </recommendedName>
    <alternativeName>
        <fullName evidence="1">ATP:glutamine synthetase adenylyltransferase</fullName>
    </alternativeName>
    <alternativeName>
        <fullName evidence="1">ATase</fullName>
    </alternativeName>
    <domain>
        <recommendedName>
            <fullName evidence="1">Glutamine synthetase adenylyl-L-tyrosine phosphorylase</fullName>
            <ecNumber evidence="1">2.7.7.89</ecNumber>
        </recommendedName>
        <alternativeName>
            <fullName evidence="1">Adenylyl removase</fullName>
            <shortName evidence="1">AR</shortName>
            <shortName evidence="1">AT-N</shortName>
        </alternativeName>
    </domain>
    <domain>
        <recommendedName>
            <fullName evidence="1">Glutamine synthetase adenylyl transferase</fullName>
            <ecNumber evidence="1">2.7.7.42</ecNumber>
        </recommendedName>
        <alternativeName>
            <fullName evidence="1">Adenylyl transferase</fullName>
            <shortName evidence="1">AT</shortName>
            <shortName evidence="1">AT-C</shortName>
        </alternativeName>
    </domain>
</protein>
<accession>Q8EAY1</accession>
<proteinExistence type="inferred from homology"/>
<keyword id="KW-0067">ATP-binding</keyword>
<keyword id="KW-0460">Magnesium</keyword>
<keyword id="KW-0511">Multifunctional enzyme</keyword>
<keyword id="KW-0547">Nucleotide-binding</keyword>
<keyword id="KW-0548">Nucleotidyltransferase</keyword>
<keyword id="KW-1185">Reference proteome</keyword>
<keyword id="KW-0808">Transferase</keyword>
<name>GLNE_SHEON</name>
<gene>
    <name evidence="1" type="primary">glnE</name>
    <name type="ordered locus">SO_3760</name>
</gene>
<reference key="1">
    <citation type="journal article" date="2002" name="Nat. Biotechnol.">
        <title>Genome sequence of the dissimilatory metal ion-reducing bacterium Shewanella oneidensis.</title>
        <authorList>
            <person name="Heidelberg J.F."/>
            <person name="Paulsen I.T."/>
            <person name="Nelson K.E."/>
            <person name="Gaidos E.J."/>
            <person name="Nelson W.C."/>
            <person name="Read T.D."/>
            <person name="Eisen J.A."/>
            <person name="Seshadri R."/>
            <person name="Ward N.L."/>
            <person name="Methe B.A."/>
            <person name="Clayton R.A."/>
            <person name="Meyer T."/>
            <person name="Tsapin A."/>
            <person name="Scott J."/>
            <person name="Beanan M.J."/>
            <person name="Brinkac L.M."/>
            <person name="Daugherty S.C."/>
            <person name="DeBoy R.T."/>
            <person name="Dodson R.J."/>
            <person name="Durkin A.S."/>
            <person name="Haft D.H."/>
            <person name="Kolonay J.F."/>
            <person name="Madupu R."/>
            <person name="Peterson J.D."/>
            <person name="Umayam L.A."/>
            <person name="White O."/>
            <person name="Wolf A.M."/>
            <person name="Vamathevan J.J."/>
            <person name="Weidman J.F."/>
            <person name="Impraim M."/>
            <person name="Lee K."/>
            <person name="Berry K.J."/>
            <person name="Lee C."/>
            <person name="Mueller J."/>
            <person name="Khouri H.M."/>
            <person name="Gill J."/>
            <person name="Utterback T.R."/>
            <person name="McDonald L.A."/>
            <person name="Feldblyum T.V."/>
            <person name="Smith H.O."/>
            <person name="Venter J.C."/>
            <person name="Nealson K.H."/>
            <person name="Fraser C.M."/>
        </authorList>
    </citation>
    <scope>NUCLEOTIDE SEQUENCE [LARGE SCALE GENOMIC DNA]</scope>
    <source>
        <strain>ATCC 700550 / JCM 31522 / CIP 106686 / LMG 19005 / NCIMB 14063 / MR-1</strain>
    </source>
</reference>
<dbReference type="EC" id="2.7.7.89" evidence="1"/>
<dbReference type="EC" id="2.7.7.42" evidence="1"/>
<dbReference type="EMBL" id="AE014299">
    <property type="protein sequence ID" value="AAN56741.2"/>
    <property type="molecule type" value="Genomic_DNA"/>
</dbReference>
<dbReference type="RefSeq" id="NP_719297.2">
    <property type="nucleotide sequence ID" value="NC_004347.2"/>
</dbReference>
<dbReference type="RefSeq" id="WP_011073537.1">
    <property type="nucleotide sequence ID" value="NC_004347.2"/>
</dbReference>
<dbReference type="SMR" id="Q8EAY1"/>
<dbReference type="STRING" id="211586.SO_3760"/>
<dbReference type="PaxDb" id="211586-SO_3760"/>
<dbReference type="KEGG" id="son:SO_3760"/>
<dbReference type="PATRIC" id="fig|211586.12.peg.3645"/>
<dbReference type="eggNOG" id="COG1391">
    <property type="taxonomic scope" value="Bacteria"/>
</dbReference>
<dbReference type="HOGENOM" id="CLU_006233_0_1_6"/>
<dbReference type="OrthoDB" id="9759366at2"/>
<dbReference type="PhylomeDB" id="Q8EAY1"/>
<dbReference type="BioCyc" id="SONE211586:G1GMP-3492-MONOMER"/>
<dbReference type="Proteomes" id="UP000008186">
    <property type="component" value="Chromosome"/>
</dbReference>
<dbReference type="GO" id="GO:0005829">
    <property type="term" value="C:cytosol"/>
    <property type="evidence" value="ECO:0000318"/>
    <property type="project" value="GO_Central"/>
</dbReference>
<dbReference type="GO" id="GO:0008882">
    <property type="term" value="F:[glutamate-ammonia-ligase] adenylyltransferase activity"/>
    <property type="evidence" value="ECO:0000318"/>
    <property type="project" value="GO_Central"/>
</dbReference>
<dbReference type="GO" id="GO:0047388">
    <property type="term" value="F:[glutamine synthetase]-adenylyl-L-tyrosine phosphorylase activity"/>
    <property type="evidence" value="ECO:0007669"/>
    <property type="project" value="UniProtKB-EC"/>
</dbReference>
<dbReference type="GO" id="GO:0005524">
    <property type="term" value="F:ATP binding"/>
    <property type="evidence" value="ECO:0007669"/>
    <property type="project" value="UniProtKB-UniRule"/>
</dbReference>
<dbReference type="GO" id="GO:0000287">
    <property type="term" value="F:magnesium ion binding"/>
    <property type="evidence" value="ECO:0007669"/>
    <property type="project" value="UniProtKB-UniRule"/>
</dbReference>
<dbReference type="GO" id="GO:0000820">
    <property type="term" value="P:regulation of glutamine family amino acid metabolic process"/>
    <property type="evidence" value="ECO:0000318"/>
    <property type="project" value="GO_Central"/>
</dbReference>
<dbReference type="CDD" id="cd05401">
    <property type="entry name" value="NT_GlnE_GlnD_like"/>
    <property type="match status" value="2"/>
</dbReference>
<dbReference type="FunFam" id="1.10.4050.10:FF:000001">
    <property type="entry name" value="Bifunctional glutamine synthetase adenylyltransferase/adenylyl-removing enzyme"/>
    <property type="match status" value="1"/>
</dbReference>
<dbReference type="FunFam" id="1.20.120.1510:FF:000001">
    <property type="entry name" value="Bifunctional glutamine synthetase adenylyltransferase/adenylyl-removing enzyme"/>
    <property type="match status" value="1"/>
</dbReference>
<dbReference type="FunFam" id="1.20.120.330:FF:000005">
    <property type="entry name" value="Bifunctional glutamine synthetase adenylyltransferase/adenylyl-removing enzyme"/>
    <property type="match status" value="1"/>
</dbReference>
<dbReference type="FunFam" id="3.30.460.10:FF:000009">
    <property type="entry name" value="Bifunctional glutamine synthetase adenylyltransferase/adenylyl-removing enzyme"/>
    <property type="match status" value="1"/>
</dbReference>
<dbReference type="FunFam" id="3.30.460.10:FF:000014">
    <property type="entry name" value="Bifunctional glutamine synthetase adenylyltransferase/adenylyl-removing enzyme"/>
    <property type="match status" value="1"/>
</dbReference>
<dbReference type="Gene3D" id="1.20.120.1510">
    <property type="match status" value="1"/>
</dbReference>
<dbReference type="Gene3D" id="3.30.460.10">
    <property type="entry name" value="Beta Polymerase, domain 2"/>
    <property type="match status" value="2"/>
</dbReference>
<dbReference type="Gene3D" id="1.10.4050.10">
    <property type="entry name" value="Glutamine synthase adenylyltransferase GlnE"/>
    <property type="match status" value="1"/>
</dbReference>
<dbReference type="Gene3D" id="1.20.120.330">
    <property type="entry name" value="Nucleotidyltransferases domain 2"/>
    <property type="match status" value="2"/>
</dbReference>
<dbReference type="HAMAP" id="MF_00802">
    <property type="entry name" value="GlnE"/>
    <property type="match status" value="1"/>
</dbReference>
<dbReference type="InterPro" id="IPR023057">
    <property type="entry name" value="GlnE"/>
</dbReference>
<dbReference type="InterPro" id="IPR005190">
    <property type="entry name" value="GlnE_rpt_dom"/>
</dbReference>
<dbReference type="InterPro" id="IPR043519">
    <property type="entry name" value="NT_sf"/>
</dbReference>
<dbReference type="InterPro" id="IPR013546">
    <property type="entry name" value="PII_UdlTrfase/GS_AdlTrfase"/>
</dbReference>
<dbReference type="NCBIfam" id="NF008292">
    <property type="entry name" value="PRK11072.1"/>
    <property type="match status" value="1"/>
</dbReference>
<dbReference type="PANTHER" id="PTHR30621:SF0">
    <property type="entry name" value="BIFUNCTIONAL GLUTAMINE SYNTHETASE ADENYLYLTRANSFERASE_ADENYLYL-REMOVING ENZYME"/>
    <property type="match status" value="1"/>
</dbReference>
<dbReference type="PANTHER" id="PTHR30621">
    <property type="entry name" value="GLUTAMINE SYNTHETASE ADENYLYLTRANSFERASE"/>
    <property type="match status" value="1"/>
</dbReference>
<dbReference type="Pfam" id="PF08335">
    <property type="entry name" value="GlnD_UR_UTase"/>
    <property type="match status" value="2"/>
</dbReference>
<dbReference type="Pfam" id="PF03710">
    <property type="entry name" value="GlnE"/>
    <property type="match status" value="2"/>
</dbReference>
<dbReference type="SUPFAM" id="SSF81301">
    <property type="entry name" value="Nucleotidyltransferase"/>
    <property type="match status" value="2"/>
</dbReference>
<dbReference type="SUPFAM" id="SSF81593">
    <property type="entry name" value="Nucleotidyltransferase substrate binding subunit/domain"/>
    <property type="match status" value="2"/>
</dbReference>
<sequence length="954" mass="109152">MAVQKDSNKSLSPLITQASERHWARLTEVWSEGLANLTAAQQQELKTVLGLSDYIANQLTRSPEWINALFADDLQQVERKLFDAQLREQLASATTEDMAKRLLRRFRNYQMVRFAWRDFLDYASLEESLLDLSALAEALVIGARDWLYKEMCVQYGTPMDKAGNPQPLLILGMGKLGGRELNFSSDIDLIFTFPEHGETVGGRRSLDNQQFFIRMGQRLVNLLDQITVDGFVFRVDMRLRPYGESGPLVVSFSGLEDYYQEQGRDWERYAMVKARSLGPWNHFSDELHSLLRPFVYRRYIDFSAIESLRKMKQLIAQEVRRRQLTDNIKLGAGGIREVEFVVQSFQLIRGGREPSLRQQSLFGAMDTLYSLGQFEYLAVDELKHSYLLLRRVENLLQAIDDKQTQTLPNNALDWARLCYVLDMTNEIDLRTHIEAAMAKIHRHFKATVGGEEGEEKAEHWTAQLWNVQQDDHAINLLAEQQIDDDKLWPLLSRWRETVTKRSIGPRGRETLDKLMPRLLDELLNQPSPSAAFEPVSKVLEQILTRTTYLELLCENPGARQQLVSLCCASPWIAVQLAKFPMLLDELIDPAHLYDTTSLDDYPSELRQYLLRVPEDDMEQQMEALRQFKLSQQLKIAAADVTGVLPVMQVSDHLTFLAEAIIEQVVMQAWQQVAVRHGVPSYLAESSDTGFAVIGYGKLGGIELGYGSDLDLVFLYEAPENMANSLTNGDRPIEVGHFYLKLAQRILHLFSTRTTSGELYEVDMRLRPSGASGLMVSEIARFGEYQAQEAWTWEHQALVRSRFVFGDNSLAVKFSQIRACVLEQSRDKDELKKAVREMRQKMRDHLLKVSEGEFDLKQSPGGITDIEFIAQYLVLANAHEYPELSIWSDNVRIFGVLAELELLPLMSAQHLTQSYCWLRDENHRLTLQQKSGKLAYADVAAHAERILAIYQAILE</sequence>